<keyword id="KW-1185">Reference proteome</keyword>
<keyword id="KW-0687">Ribonucleoprotein</keyword>
<keyword id="KW-0689">Ribosomal protein</keyword>
<reference key="1">
    <citation type="journal article" date="2001" name="Proc. Natl. Acad. Sci. U.S.A.">
        <title>Complete genomic sequence of Pasteurella multocida Pm70.</title>
        <authorList>
            <person name="May B.J."/>
            <person name="Zhang Q."/>
            <person name="Li L.L."/>
            <person name="Paustian M.L."/>
            <person name="Whittam T.S."/>
            <person name="Kapur V."/>
        </authorList>
    </citation>
    <scope>NUCLEOTIDE SEQUENCE [LARGE SCALE GENOMIC DNA]</scope>
    <source>
        <strain>Pm70</strain>
    </source>
</reference>
<organism>
    <name type="scientific">Pasteurella multocida (strain Pm70)</name>
    <dbReference type="NCBI Taxonomy" id="272843"/>
    <lineage>
        <taxon>Bacteria</taxon>
        <taxon>Pseudomonadati</taxon>
        <taxon>Pseudomonadota</taxon>
        <taxon>Gammaproteobacteria</taxon>
        <taxon>Pasteurellales</taxon>
        <taxon>Pasteurellaceae</taxon>
        <taxon>Pasteurella</taxon>
    </lineage>
</organism>
<comment type="similarity">
    <text evidence="1">Belongs to the bacterial ribosomal protein bL36 family.</text>
</comment>
<protein>
    <recommendedName>
        <fullName evidence="1">Large ribosomal subunit protein bL36</fullName>
    </recommendedName>
    <alternativeName>
        <fullName evidence="2">50S ribosomal protein L36</fullName>
    </alternativeName>
</protein>
<evidence type="ECO:0000255" key="1">
    <source>
        <dbReference type="HAMAP-Rule" id="MF_00251"/>
    </source>
</evidence>
<evidence type="ECO:0000305" key="2"/>
<name>RL36_PASMU</name>
<feature type="chain" id="PRO_0000126231" description="Large ribosomal subunit protein bL36">
    <location>
        <begin position="1"/>
        <end position="37"/>
    </location>
</feature>
<proteinExistence type="inferred from homology"/>
<dbReference type="EMBL" id="AE004439">
    <property type="protein sequence ID" value="AAK03478.1"/>
    <property type="molecule type" value="Genomic_DNA"/>
</dbReference>
<dbReference type="RefSeq" id="WP_005548767.1">
    <property type="nucleotide sequence ID" value="NC_002663.1"/>
</dbReference>
<dbReference type="SMR" id="P57942"/>
<dbReference type="STRING" id="272843.PM1394"/>
<dbReference type="EnsemblBacteria" id="AAK03478">
    <property type="protein sequence ID" value="AAK03478"/>
    <property type="gene ID" value="PM1394"/>
</dbReference>
<dbReference type="GeneID" id="77263410"/>
<dbReference type="KEGG" id="pmu:PM1394"/>
<dbReference type="HOGENOM" id="CLU_135723_6_2_6"/>
<dbReference type="OrthoDB" id="9802520at2"/>
<dbReference type="Proteomes" id="UP000000809">
    <property type="component" value="Chromosome"/>
</dbReference>
<dbReference type="GO" id="GO:0005737">
    <property type="term" value="C:cytoplasm"/>
    <property type="evidence" value="ECO:0007669"/>
    <property type="project" value="UniProtKB-ARBA"/>
</dbReference>
<dbReference type="GO" id="GO:1990904">
    <property type="term" value="C:ribonucleoprotein complex"/>
    <property type="evidence" value="ECO:0007669"/>
    <property type="project" value="UniProtKB-KW"/>
</dbReference>
<dbReference type="GO" id="GO:0005840">
    <property type="term" value="C:ribosome"/>
    <property type="evidence" value="ECO:0007669"/>
    <property type="project" value="UniProtKB-KW"/>
</dbReference>
<dbReference type="GO" id="GO:0003735">
    <property type="term" value="F:structural constituent of ribosome"/>
    <property type="evidence" value="ECO:0007669"/>
    <property type="project" value="InterPro"/>
</dbReference>
<dbReference type="GO" id="GO:0006412">
    <property type="term" value="P:translation"/>
    <property type="evidence" value="ECO:0007669"/>
    <property type="project" value="UniProtKB-UniRule"/>
</dbReference>
<dbReference type="HAMAP" id="MF_00251">
    <property type="entry name" value="Ribosomal_bL36"/>
    <property type="match status" value="1"/>
</dbReference>
<dbReference type="InterPro" id="IPR000473">
    <property type="entry name" value="Ribosomal_bL36"/>
</dbReference>
<dbReference type="InterPro" id="IPR035977">
    <property type="entry name" value="Ribosomal_bL36_sp"/>
</dbReference>
<dbReference type="NCBIfam" id="TIGR01022">
    <property type="entry name" value="rpmJ_bact"/>
    <property type="match status" value="1"/>
</dbReference>
<dbReference type="PANTHER" id="PTHR42888">
    <property type="entry name" value="50S RIBOSOMAL PROTEIN L36, CHLOROPLASTIC"/>
    <property type="match status" value="1"/>
</dbReference>
<dbReference type="PANTHER" id="PTHR42888:SF1">
    <property type="entry name" value="LARGE RIBOSOMAL SUBUNIT PROTEIN BL36C"/>
    <property type="match status" value="1"/>
</dbReference>
<dbReference type="Pfam" id="PF00444">
    <property type="entry name" value="Ribosomal_L36"/>
    <property type="match status" value="1"/>
</dbReference>
<dbReference type="SUPFAM" id="SSF57840">
    <property type="entry name" value="Ribosomal protein L36"/>
    <property type="match status" value="1"/>
</dbReference>
<dbReference type="PROSITE" id="PS00828">
    <property type="entry name" value="RIBOSOMAL_L36"/>
    <property type="match status" value="1"/>
</dbReference>
<gene>
    <name evidence="1" type="primary">rpmJ</name>
    <name type="synonym">rpl36</name>
    <name type="ordered locus">PM1394</name>
</gene>
<accession>P57942</accession>
<sequence length="37" mass="4279">MKVRASVKKLCRNCKIVKREGVVRVLCSDPKHKQRQG</sequence>